<keyword id="KW-0997">Cell inner membrane</keyword>
<keyword id="KW-1003">Cell membrane</keyword>
<keyword id="KW-0472">Membrane</keyword>
<keyword id="KW-1185">Reference proteome</keyword>
<keyword id="KW-0812">Transmembrane</keyword>
<keyword id="KW-1133">Transmembrane helix</keyword>
<organism>
    <name type="scientific">Shigella sonnei (strain Ss046)</name>
    <dbReference type="NCBI Taxonomy" id="300269"/>
    <lineage>
        <taxon>Bacteria</taxon>
        <taxon>Pseudomonadati</taxon>
        <taxon>Pseudomonadota</taxon>
        <taxon>Gammaproteobacteria</taxon>
        <taxon>Enterobacterales</taxon>
        <taxon>Enterobacteriaceae</taxon>
        <taxon>Shigella</taxon>
    </lineage>
</organism>
<proteinExistence type="inferred from homology"/>
<feature type="chain" id="PRO_1000064982" description="UPF0208 membrane protein YfbV">
    <location>
        <begin position="1"/>
        <end position="151"/>
    </location>
</feature>
<feature type="transmembrane region" description="Helical" evidence="1">
    <location>
        <begin position="46"/>
        <end position="65"/>
    </location>
</feature>
<feature type="transmembrane region" description="Helical" evidence="1">
    <location>
        <begin position="69"/>
        <end position="91"/>
    </location>
</feature>
<gene>
    <name evidence="1" type="primary">yfbV</name>
    <name type="ordered locus">SSON_2352</name>
</gene>
<comment type="subcellular location">
    <subcellularLocation>
        <location evidence="1">Cell inner membrane</location>
        <topology evidence="1">Multi-pass membrane protein</topology>
    </subcellularLocation>
</comment>
<comment type="similarity">
    <text evidence="1">Belongs to the UPF0208 family.</text>
</comment>
<name>YFBV_SHISS</name>
<dbReference type="EMBL" id="CP000038">
    <property type="protein sequence ID" value="AAZ88996.1"/>
    <property type="molecule type" value="Genomic_DNA"/>
</dbReference>
<dbReference type="RefSeq" id="WP_000106627.1">
    <property type="nucleotide sequence ID" value="NC_007384.1"/>
</dbReference>
<dbReference type="GeneID" id="93774879"/>
<dbReference type="KEGG" id="ssn:SSON_2352"/>
<dbReference type="HOGENOM" id="CLU_128746_0_0_6"/>
<dbReference type="Proteomes" id="UP000002529">
    <property type="component" value="Chromosome"/>
</dbReference>
<dbReference type="GO" id="GO:0005886">
    <property type="term" value="C:plasma membrane"/>
    <property type="evidence" value="ECO:0007669"/>
    <property type="project" value="UniProtKB-SubCell"/>
</dbReference>
<dbReference type="HAMAP" id="MF_01101">
    <property type="entry name" value="UPF0208"/>
    <property type="match status" value="1"/>
</dbReference>
<dbReference type="InterPro" id="IPR007334">
    <property type="entry name" value="UPF0208"/>
</dbReference>
<dbReference type="NCBIfam" id="NF002493">
    <property type="entry name" value="PRK01816.1"/>
    <property type="match status" value="1"/>
</dbReference>
<dbReference type="Pfam" id="PF04217">
    <property type="entry name" value="DUF412"/>
    <property type="match status" value="1"/>
</dbReference>
<evidence type="ECO:0000255" key="1">
    <source>
        <dbReference type="HAMAP-Rule" id="MF_01101"/>
    </source>
</evidence>
<protein>
    <recommendedName>
        <fullName evidence="1">UPF0208 membrane protein YfbV</fullName>
    </recommendedName>
</protein>
<accession>Q3YZR6</accession>
<sequence>MSTPDNRSVNFFSLFRRGQHYSKTWPLEKRLAPVFVENRVIKMTRYAIRFMPPIAVFTLCWQIALGGQLGPAVATALFALSLPMQGLWWLGKRSVTPLPPAILNWFYEVRGKLQESGQVLAPVEGKPDYQALADTLKRAFKQLDKTFLDDL</sequence>
<reference key="1">
    <citation type="journal article" date="2005" name="Nucleic Acids Res.">
        <title>Genome dynamics and diversity of Shigella species, the etiologic agents of bacillary dysentery.</title>
        <authorList>
            <person name="Yang F."/>
            <person name="Yang J."/>
            <person name="Zhang X."/>
            <person name="Chen L."/>
            <person name="Jiang Y."/>
            <person name="Yan Y."/>
            <person name="Tang X."/>
            <person name="Wang J."/>
            <person name="Xiong Z."/>
            <person name="Dong J."/>
            <person name="Xue Y."/>
            <person name="Zhu Y."/>
            <person name="Xu X."/>
            <person name="Sun L."/>
            <person name="Chen S."/>
            <person name="Nie H."/>
            <person name="Peng J."/>
            <person name="Xu J."/>
            <person name="Wang Y."/>
            <person name="Yuan Z."/>
            <person name="Wen Y."/>
            <person name="Yao Z."/>
            <person name="Shen Y."/>
            <person name="Qiang B."/>
            <person name="Hou Y."/>
            <person name="Yu J."/>
            <person name="Jin Q."/>
        </authorList>
    </citation>
    <scope>NUCLEOTIDE SEQUENCE [LARGE SCALE GENOMIC DNA]</scope>
    <source>
        <strain>Ss046</strain>
    </source>
</reference>